<protein>
    <recommendedName>
        <fullName evidence="1">GTPase Obg</fullName>
        <ecNumber evidence="1">3.6.5.-</ecNumber>
    </recommendedName>
    <alternativeName>
        <fullName evidence="1">GTP-binding protein Obg</fullName>
    </alternativeName>
</protein>
<organism>
    <name type="scientific">Levilactobacillus brevis (strain ATCC 367 / BCRC 12310 / CIP 105137 / JCM 1170 / LMG 11437 / NCIMB 947 / NCTC 947)</name>
    <name type="common">Lactobacillus brevis</name>
    <dbReference type="NCBI Taxonomy" id="387344"/>
    <lineage>
        <taxon>Bacteria</taxon>
        <taxon>Bacillati</taxon>
        <taxon>Bacillota</taxon>
        <taxon>Bacilli</taxon>
        <taxon>Lactobacillales</taxon>
        <taxon>Lactobacillaceae</taxon>
        <taxon>Levilactobacillus</taxon>
    </lineage>
</organism>
<evidence type="ECO:0000255" key="1">
    <source>
        <dbReference type="HAMAP-Rule" id="MF_01454"/>
    </source>
</evidence>
<evidence type="ECO:0000255" key="2">
    <source>
        <dbReference type="PROSITE-ProRule" id="PRU01229"/>
    </source>
</evidence>
<evidence type="ECO:0000255" key="3">
    <source>
        <dbReference type="PROSITE-ProRule" id="PRU01231"/>
    </source>
</evidence>
<evidence type="ECO:0000256" key="4">
    <source>
        <dbReference type="SAM" id="MobiDB-lite"/>
    </source>
</evidence>
<proteinExistence type="inferred from homology"/>
<accession>Q03QP2</accession>
<comment type="function">
    <text evidence="1">An essential GTPase which binds GTP, GDP and possibly (p)ppGpp with moderate affinity, with high nucleotide exchange rates and a fairly low GTP hydrolysis rate. Plays a role in control of the cell cycle, stress response, ribosome biogenesis and in those bacteria that undergo differentiation, in morphogenesis control.</text>
</comment>
<comment type="cofactor">
    <cofactor evidence="1">
        <name>Mg(2+)</name>
        <dbReference type="ChEBI" id="CHEBI:18420"/>
    </cofactor>
</comment>
<comment type="subunit">
    <text evidence="1">Monomer.</text>
</comment>
<comment type="subcellular location">
    <subcellularLocation>
        <location evidence="1">Cytoplasm</location>
    </subcellularLocation>
</comment>
<comment type="similarity">
    <text evidence="1">Belongs to the TRAFAC class OBG-HflX-like GTPase superfamily. OBG GTPase family.</text>
</comment>
<dbReference type="EC" id="3.6.5.-" evidence="1"/>
<dbReference type="EMBL" id="CP000416">
    <property type="protein sequence ID" value="ABJ64480.1"/>
    <property type="molecule type" value="Genomic_DNA"/>
</dbReference>
<dbReference type="SMR" id="Q03QP2"/>
<dbReference type="STRING" id="387344.LVIS_1382"/>
<dbReference type="KEGG" id="lbr:LVIS_1382"/>
<dbReference type="eggNOG" id="COG0536">
    <property type="taxonomic scope" value="Bacteria"/>
</dbReference>
<dbReference type="HOGENOM" id="CLU_011747_2_1_9"/>
<dbReference type="Proteomes" id="UP000001652">
    <property type="component" value="Chromosome"/>
</dbReference>
<dbReference type="GO" id="GO:0005737">
    <property type="term" value="C:cytoplasm"/>
    <property type="evidence" value="ECO:0007669"/>
    <property type="project" value="UniProtKB-SubCell"/>
</dbReference>
<dbReference type="GO" id="GO:0005525">
    <property type="term" value="F:GTP binding"/>
    <property type="evidence" value="ECO:0007669"/>
    <property type="project" value="UniProtKB-UniRule"/>
</dbReference>
<dbReference type="GO" id="GO:0003924">
    <property type="term" value="F:GTPase activity"/>
    <property type="evidence" value="ECO:0007669"/>
    <property type="project" value="UniProtKB-UniRule"/>
</dbReference>
<dbReference type="GO" id="GO:0000287">
    <property type="term" value="F:magnesium ion binding"/>
    <property type="evidence" value="ECO:0007669"/>
    <property type="project" value="InterPro"/>
</dbReference>
<dbReference type="GO" id="GO:0042254">
    <property type="term" value="P:ribosome biogenesis"/>
    <property type="evidence" value="ECO:0007669"/>
    <property type="project" value="UniProtKB-UniRule"/>
</dbReference>
<dbReference type="CDD" id="cd01898">
    <property type="entry name" value="Obg"/>
    <property type="match status" value="1"/>
</dbReference>
<dbReference type="FunFam" id="2.70.210.12:FF:000001">
    <property type="entry name" value="GTPase Obg"/>
    <property type="match status" value="1"/>
</dbReference>
<dbReference type="Gene3D" id="3.30.300.350">
    <property type="entry name" value="GTP-binding protein OBG, C-terminal domain"/>
    <property type="match status" value="1"/>
</dbReference>
<dbReference type="Gene3D" id="2.70.210.12">
    <property type="entry name" value="GTP1/OBG domain"/>
    <property type="match status" value="1"/>
</dbReference>
<dbReference type="Gene3D" id="3.40.50.300">
    <property type="entry name" value="P-loop containing nucleotide triphosphate hydrolases"/>
    <property type="match status" value="1"/>
</dbReference>
<dbReference type="HAMAP" id="MF_01454">
    <property type="entry name" value="GTPase_Obg"/>
    <property type="match status" value="1"/>
</dbReference>
<dbReference type="InterPro" id="IPR031167">
    <property type="entry name" value="G_OBG"/>
</dbReference>
<dbReference type="InterPro" id="IPR006073">
    <property type="entry name" value="GTP-bd"/>
</dbReference>
<dbReference type="InterPro" id="IPR014100">
    <property type="entry name" value="GTP-bd_Obg/CgtA"/>
</dbReference>
<dbReference type="InterPro" id="IPR036346">
    <property type="entry name" value="GTP-bd_prot_GTP1/OBG_C_sf"/>
</dbReference>
<dbReference type="InterPro" id="IPR006074">
    <property type="entry name" value="GTP1-OBG_CS"/>
</dbReference>
<dbReference type="InterPro" id="IPR006169">
    <property type="entry name" value="GTP1_OBG_dom"/>
</dbReference>
<dbReference type="InterPro" id="IPR036726">
    <property type="entry name" value="GTP1_OBG_dom_sf"/>
</dbReference>
<dbReference type="InterPro" id="IPR045086">
    <property type="entry name" value="OBG_GTPase"/>
</dbReference>
<dbReference type="InterPro" id="IPR015349">
    <property type="entry name" value="OCT_dom"/>
</dbReference>
<dbReference type="InterPro" id="IPR027417">
    <property type="entry name" value="P-loop_NTPase"/>
</dbReference>
<dbReference type="NCBIfam" id="TIGR02729">
    <property type="entry name" value="Obg_CgtA"/>
    <property type="match status" value="1"/>
</dbReference>
<dbReference type="NCBIfam" id="TIGR03595">
    <property type="entry name" value="Obg_CgtA_exten"/>
    <property type="match status" value="1"/>
</dbReference>
<dbReference type="NCBIfam" id="NF008954">
    <property type="entry name" value="PRK12296.1"/>
    <property type="match status" value="1"/>
</dbReference>
<dbReference type="NCBIfam" id="NF008955">
    <property type="entry name" value="PRK12297.1"/>
    <property type="match status" value="1"/>
</dbReference>
<dbReference type="NCBIfam" id="NF008956">
    <property type="entry name" value="PRK12299.1"/>
    <property type="match status" value="1"/>
</dbReference>
<dbReference type="PANTHER" id="PTHR11702">
    <property type="entry name" value="DEVELOPMENTALLY REGULATED GTP-BINDING PROTEIN-RELATED"/>
    <property type="match status" value="1"/>
</dbReference>
<dbReference type="PANTHER" id="PTHR11702:SF31">
    <property type="entry name" value="MITOCHONDRIAL RIBOSOME-ASSOCIATED GTPASE 2"/>
    <property type="match status" value="1"/>
</dbReference>
<dbReference type="Pfam" id="PF09269">
    <property type="entry name" value="DUF1967"/>
    <property type="match status" value="1"/>
</dbReference>
<dbReference type="Pfam" id="PF01018">
    <property type="entry name" value="GTP1_OBG"/>
    <property type="match status" value="1"/>
</dbReference>
<dbReference type="Pfam" id="PF01926">
    <property type="entry name" value="MMR_HSR1"/>
    <property type="match status" value="1"/>
</dbReference>
<dbReference type="PIRSF" id="PIRSF002401">
    <property type="entry name" value="GTP_bd_Obg/CgtA"/>
    <property type="match status" value="1"/>
</dbReference>
<dbReference type="PRINTS" id="PR00326">
    <property type="entry name" value="GTP1OBG"/>
</dbReference>
<dbReference type="SUPFAM" id="SSF102741">
    <property type="entry name" value="Obg GTP-binding protein C-terminal domain"/>
    <property type="match status" value="1"/>
</dbReference>
<dbReference type="SUPFAM" id="SSF82051">
    <property type="entry name" value="Obg GTP-binding protein N-terminal domain"/>
    <property type="match status" value="1"/>
</dbReference>
<dbReference type="SUPFAM" id="SSF52540">
    <property type="entry name" value="P-loop containing nucleoside triphosphate hydrolases"/>
    <property type="match status" value="1"/>
</dbReference>
<dbReference type="PROSITE" id="PS51710">
    <property type="entry name" value="G_OBG"/>
    <property type="match status" value="1"/>
</dbReference>
<dbReference type="PROSITE" id="PS00905">
    <property type="entry name" value="GTP1_OBG"/>
    <property type="match status" value="1"/>
</dbReference>
<dbReference type="PROSITE" id="PS51883">
    <property type="entry name" value="OBG"/>
    <property type="match status" value="1"/>
</dbReference>
<dbReference type="PROSITE" id="PS51881">
    <property type="entry name" value="OCT"/>
    <property type="match status" value="1"/>
</dbReference>
<reference key="1">
    <citation type="journal article" date="2006" name="Proc. Natl. Acad. Sci. U.S.A.">
        <title>Comparative genomics of the lactic acid bacteria.</title>
        <authorList>
            <person name="Makarova K.S."/>
            <person name="Slesarev A."/>
            <person name="Wolf Y.I."/>
            <person name="Sorokin A."/>
            <person name="Mirkin B."/>
            <person name="Koonin E.V."/>
            <person name="Pavlov A."/>
            <person name="Pavlova N."/>
            <person name="Karamychev V."/>
            <person name="Polouchine N."/>
            <person name="Shakhova V."/>
            <person name="Grigoriev I."/>
            <person name="Lou Y."/>
            <person name="Rohksar D."/>
            <person name="Lucas S."/>
            <person name="Huang K."/>
            <person name="Goodstein D.M."/>
            <person name="Hawkins T."/>
            <person name="Plengvidhya V."/>
            <person name="Welker D."/>
            <person name="Hughes J."/>
            <person name="Goh Y."/>
            <person name="Benson A."/>
            <person name="Baldwin K."/>
            <person name="Lee J.-H."/>
            <person name="Diaz-Muniz I."/>
            <person name="Dosti B."/>
            <person name="Smeianov V."/>
            <person name="Wechter W."/>
            <person name="Barabote R."/>
            <person name="Lorca G."/>
            <person name="Altermann E."/>
            <person name="Barrangou R."/>
            <person name="Ganesan B."/>
            <person name="Xie Y."/>
            <person name="Rawsthorne H."/>
            <person name="Tamir D."/>
            <person name="Parker C."/>
            <person name="Breidt F."/>
            <person name="Broadbent J.R."/>
            <person name="Hutkins R."/>
            <person name="O'Sullivan D."/>
            <person name="Steele J."/>
            <person name="Unlu G."/>
            <person name="Saier M.H. Jr."/>
            <person name="Klaenhammer T."/>
            <person name="Richardson P."/>
            <person name="Kozyavkin S."/>
            <person name="Weimer B.C."/>
            <person name="Mills D.A."/>
        </authorList>
    </citation>
    <scope>NUCLEOTIDE SEQUENCE [LARGE SCALE GENOMIC DNA]</scope>
    <source>
        <strain>ATCC 367 / BCRC 12310 / CIP 105137 / JCM 1170 / LMG 11437 / NCIMB 947 / NCTC 947</strain>
    </source>
</reference>
<feature type="chain" id="PRO_0000385990" description="GTPase Obg">
    <location>
        <begin position="1"/>
        <end position="431"/>
    </location>
</feature>
<feature type="domain" description="Obg" evidence="3">
    <location>
        <begin position="1"/>
        <end position="158"/>
    </location>
</feature>
<feature type="domain" description="OBG-type G" evidence="1">
    <location>
        <begin position="159"/>
        <end position="335"/>
    </location>
</feature>
<feature type="domain" description="OCT" evidence="2">
    <location>
        <begin position="353"/>
        <end position="431"/>
    </location>
</feature>
<feature type="region of interest" description="Disordered" evidence="4">
    <location>
        <begin position="125"/>
        <end position="145"/>
    </location>
</feature>
<feature type="binding site" evidence="1">
    <location>
        <begin position="165"/>
        <end position="172"/>
    </location>
    <ligand>
        <name>GTP</name>
        <dbReference type="ChEBI" id="CHEBI:37565"/>
    </ligand>
</feature>
<feature type="binding site" evidence="1">
    <location>
        <position position="172"/>
    </location>
    <ligand>
        <name>Mg(2+)</name>
        <dbReference type="ChEBI" id="CHEBI:18420"/>
    </ligand>
</feature>
<feature type="binding site" evidence="1">
    <location>
        <begin position="190"/>
        <end position="194"/>
    </location>
    <ligand>
        <name>GTP</name>
        <dbReference type="ChEBI" id="CHEBI:37565"/>
    </ligand>
</feature>
<feature type="binding site" evidence="1">
    <location>
        <position position="192"/>
    </location>
    <ligand>
        <name>Mg(2+)</name>
        <dbReference type="ChEBI" id="CHEBI:18420"/>
    </ligand>
</feature>
<feature type="binding site" evidence="1">
    <location>
        <begin position="212"/>
        <end position="215"/>
    </location>
    <ligand>
        <name>GTP</name>
        <dbReference type="ChEBI" id="CHEBI:37565"/>
    </ligand>
</feature>
<feature type="binding site" evidence="1">
    <location>
        <begin position="282"/>
        <end position="285"/>
    </location>
    <ligand>
        <name>GTP</name>
        <dbReference type="ChEBI" id="CHEBI:37565"/>
    </ligand>
</feature>
<feature type="binding site" evidence="1">
    <location>
        <begin position="316"/>
        <end position="318"/>
    </location>
    <ligand>
        <name>GTP</name>
        <dbReference type="ChEBI" id="CHEBI:37565"/>
    </ligand>
</feature>
<gene>
    <name evidence="1" type="primary">obg</name>
    <name type="ordered locus">LVIS_1382</name>
</gene>
<keyword id="KW-0963">Cytoplasm</keyword>
<keyword id="KW-0342">GTP-binding</keyword>
<keyword id="KW-0378">Hydrolase</keyword>
<keyword id="KW-0460">Magnesium</keyword>
<keyword id="KW-0479">Metal-binding</keyword>
<keyword id="KW-0547">Nucleotide-binding</keyword>
<keyword id="KW-1185">Reference proteome</keyword>
<sequence length="431" mass="46999">MFVDQVKINVKAGNGGNGMVAFRREKFVPNGGPAGGDGGRGGNVVFVVDEGLRTLMDFRYQRKFKAKSGGNGAIKSMTGRGAEDTIIKVPQGTTIMDAETDQVIGDLVAPDDSVIVAHGGRGGRGNIHFASPKNPAPEIAENGEPGEEREIRLELKVLADVGLVGFPSVGKSTLLSTVTSAKPKIAEYHFTTLVPNLGMVRLPDGRDFVMADLPGLIEGAANGVGLGFQFLRHVERTRVILHLIDMSGLEGRTPYDDFEKINQELQTYDPDILKRPQIVVANKMDMPDSAENLAQFKEDLKQDTLLAQTPEIFAVSALTHDGLTPLLQRTADMLAETPQFPVKQPEVATTAEYNFQPEAEFTLNQDADGTWILGGDKLVKLFKMTDVNHEESLLRFARQMRGMGVDDSLREHGAKNGDLVKIDDFTFEYMA</sequence>
<name>OBG_LEVBA</name>